<keyword id="KW-0449">Lipoprotein</keyword>
<keyword id="KW-0472">Membrane</keyword>
<keyword id="KW-0564">Palmitate</keyword>
<keyword id="KW-0602">Photosynthesis</keyword>
<keyword id="KW-0604">Photosystem II</keyword>
<keyword id="KW-1185">Reference proteome</keyword>
<keyword id="KW-0732">Signal</keyword>
<keyword id="KW-0793">Thylakoid</keyword>
<evidence type="ECO:0000255" key="1">
    <source>
        <dbReference type="HAMAP-Rule" id="MF_01348"/>
    </source>
</evidence>
<sequence length="339" mass="37498">MNRLIKFSFNLILIFVLGLGLSGCVTTTRIPVQSSSPWEEIELANDDNPLDIAFVDDNHGFLVGANRLILETTDGGSTWEERDLDIPAEENFRLMSIDFKEDEGWIVGQPNLVLHSEDAGKNWTRLSLGSQLPGNPYLITTLDTSSAELATTAGAVYRTTDGGKNWEGRVAEASGGVRDLRRKEDGTYVSVSSLGNFFVTLDKTDQAWQSHQRASSKRVQTLGFKPDGQLWMLSRGAEIRLNDASGDYESWSKPIIPLVNGYNYMDMAWDPEGNIWAGGGNGTLLVSKDDGNSWEKDPIGYATPTNFIRIFFLKNPNGNPPKGFVLGERGHVLRWVGYS</sequence>
<organism>
    <name type="scientific">Prochlorococcus marinus (strain SARG / CCMP1375 / SS120)</name>
    <dbReference type="NCBI Taxonomy" id="167539"/>
    <lineage>
        <taxon>Bacteria</taxon>
        <taxon>Bacillati</taxon>
        <taxon>Cyanobacteriota</taxon>
        <taxon>Cyanophyceae</taxon>
        <taxon>Synechococcales</taxon>
        <taxon>Prochlorococcaceae</taxon>
        <taxon>Prochlorococcus</taxon>
    </lineage>
</organism>
<gene>
    <name evidence="1" type="primary">ycf48</name>
    <name type="ordered locus">Pro_0327</name>
</gene>
<accession>Q7VDP1</accession>
<dbReference type="EMBL" id="AE017126">
    <property type="protein sequence ID" value="AAP99373.1"/>
    <property type="molecule type" value="Genomic_DNA"/>
</dbReference>
<dbReference type="RefSeq" id="NP_874721.1">
    <property type="nucleotide sequence ID" value="NC_005042.1"/>
</dbReference>
<dbReference type="RefSeq" id="WP_011124482.1">
    <property type="nucleotide sequence ID" value="NC_005042.1"/>
</dbReference>
<dbReference type="SMR" id="Q7VDP1"/>
<dbReference type="STRING" id="167539.Pro_0327"/>
<dbReference type="EnsemblBacteria" id="AAP99373">
    <property type="protein sequence ID" value="AAP99373"/>
    <property type="gene ID" value="Pro_0327"/>
</dbReference>
<dbReference type="KEGG" id="pma:Pro_0327"/>
<dbReference type="PATRIC" id="fig|167539.5.peg.336"/>
<dbReference type="eggNOG" id="COG4447">
    <property type="taxonomic scope" value="Bacteria"/>
</dbReference>
<dbReference type="HOGENOM" id="CLU_057027_0_0_3"/>
<dbReference type="OrthoDB" id="9813892at2"/>
<dbReference type="Proteomes" id="UP000001420">
    <property type="component" value="Chromosome"/>
</dbReference>
<dbReference type="GO" id="GO:0009523">
    <property type="term" value="C:photosystem II"/>
    <property type="evidence" value="ECO:0007669"/>
    <property type="project" value="UniProtKB-KW"/>
</dbReference>
<dbReference type="GO" id="GO:0031676">
    <property type="term" value="C:plasma membrane-derived thylakoid membrane"/>
    <property type="evidence" value="ECO:0007669"/>
    <property type="project" value="UniProtKB-SubCell"/>
</dbReference>
<dbReference type="GO" id="GO:0031977">
    <property type="term" value="C:thylakoid lumen"/>
    <property type="evidence" value="ECO:0007669"/>
    <property type="project" value="UniProtKB-UniRule"/>
</dbReference>
<dbReference type="GO" id="GO:0015979">
    <property type="term" value="P:photosynthesis"/>
    <property type="evidence" value="ECO:0007669"/>
    <property type="project" value="UniProtKB-KW"/>
</dbReference>
<dbReference type="Gene3D" id="2.130.10.10">
    <property type="entry name" value="YVTN repeat-like/Quinoprotein amine dehydrogenase"/>
    <property type="match status" value="2"/>
</dbReference>
<dbReference type="HAMAP" id="MF_01348">
    <property type="entry name" value="Ycf48"/>
    <property type="match status" value="1"/>
</dbReference>
<dbReference type="InterPro" id="IPR028203">
    <property type="entry name" value="PSII_CF48-like_dom"/>
</dbReference>
<dbReference type="InterPro" id="IPR015943">
    <property type="entry name" value="WD40/YVTN_repeat-like_dom_sf"/>
</dbReference>
<dbReference type="InterPro" id="IPR016705">
    <property type="entry name" value="Ycf48/Hcf136"/>
</dbReference>
<dbReference type="NCBIfam" id="NF010237">
    <property type="entry name" value="PRK13684.1"/>
    <property type="match status" value="1"/>
</dbReference>
<dbReference type="PANTHER" id="PTHR47199">
    <property type="entry name" value="PHOTOSYSTEM II STABILITY/ASSEMBLY FACTOR HCF136, CHLOROPLASTIC"/>
    <property type="match status" value="1"/>
</dbReference>
<dbReference type="PANTHER" id="PTHR47199:SF2">
    <property type="entry name" value="PHOTOSYSTEM II STABILITY_ASSEMBLY FACTOR HCF136, CHLOROPLASTIC"/>
    <property type="match status" value="1"/>
</dbReference>
<dbReference type="Pfam" id="PF14870">
    <property type="entry name" value="PSII_BNR"/>
    <property type="match status" value="1"/>
</dbReference>
<dbReference type="PIRSF" id="PIRSF017875">
    <property type="entry name" value="PSII_HCF136"/>
    <property type="match status" value="1"/>
</dbReference>
<dbReference type="SUPFAM" id="SSF110296">
    <property type="entry name" value="Oligoxyloglucan reducing end-specific cellobiohydrolase"/>
    <property type="match status" value="1"/>
</dbReference>
<dbReference type="PROSITE" id="PS51257">
    <property type="entry name" value="PROKAR_LIPOPROTEIN"/>
    <property type="match status" value="1"/>
</dbReference>
<protein>
    <recommendedName>
        <fullName evidence="1">Photosystem II assembly lipoprotein Ycf48</fullName>
    </recommendedName>
</protein>
<name>YCF48_PROMA</name>
<comment type="function">
    <text evidence="1">A factor required for optimal assembly of photosystem II (PSII), acting in the early stages of PSII assembly. Also plays a role in replacement of photodamaged D1 (psbA). Assists YidC in synthesis of chlorophyll-binding proteins.</text>
</comment>
<comment type="subunit">
    <text evidence="1">Part of early PSII assembly complexes which includes D1 (psbA) and PsbI; not found in mature PSII. Binds to the lumenal side of PSII complexes. Interacts with YidC.</text>
</comment>
<comment type="subcellular location">
    <subcellularLocation>
        <location evidence="1">Cellular thylakoid membrane</location>
        <topology evidence="1">Lipid-anchor</topology>
        <orientation evidence="1">Lumenal side</orientation>
    </subcellularLocation>
    <text evidence="1">Associated with a PSII precusor complex on the lumenal side of the thylakoid membrane.</text>
</comment>
<comment type="domain">
    <text evidence="1">A 7-bladed beta-propeller torus, about 55 by 55 Angstroms, with a depth of about 25 Angstroms and a central pore.</text>
</comment>
<comment type="similarity">
    <text evidence="1">Belongs to the Ycf48 family.</text>
</comment>
<proteinExistence type="inferred from homology"/>
<reference key="1">
    <citation type="journal article" date="2003" name="Proc. Natl. Acad. Sci. U.S.A.">
        <title>Genome sequence of the cyanobacterium Prochlorococcus marinus SS120, a nearly minimal oxyphototrophic genome.</title>
        <authorList>
            <person name="Dufresne A."/>
            <person name="Salanoubat M."/>
            <person name="Partensky F."/>
            <person name="Artiguenave F."/>
            <person name="Axmann I.M."/>
            <person name="Barbe V."/>
            <person name="Duprat S."/>
            <person name="Galperin M.Y."/>
            <person name="Koonin E.V."/>
            <person name="Le Gall F."/>
            <person name="Makarova K.S."/>
            <person name="Ostrowski M."/>
            <person name="Oztas S."/>
            <person name="Robert C."/>
            <person name="Rogozin I.B."/>
            <person name="Scanlan D.J."/>
            <person name="Tandeau de Marsac N."/>
            <person name="Weissenbach J."/>
            <person name="Wincker P."/>
            <person name="Wolf Y.I."/>
            <person name="Hess W.R."/>
        </authorList>
    </citation>
    <scope>NUCLEOTIDE SEQUENCE [LARGE SCALE GENOMIC DNA]</scope>
    <source>
        <strain>SARG / CCMP1375 / SS120</strain>
    </source>
</reference>
<feature type="signal peptide" evidence="1">
    <location>
        <begin position="1"/>
        <end position="23"/>
    </location>
</feature>
<feature type="chain" id="PRO_0000239676" description="Photosystem II assembly lipoprotein Ycf48" evidence="1">
    <location>
        <begin position="24"/>
        <end position="339"/>
    </location>
</feature>
<feature type="lipid moiety-binding region" description="N-palmitoyl cysteine" evidence="1">
    <location>
        <position position="24"/>
    </location>
</feature>
<feature type="lipid moiety-binding region" description="S-diacylglycerol cysteine" evidence="1">
    <location>
        <position position="24"/>
    </location>
</feature>